<protein>
    <recommendedName>
        <fullName evidence="1">Large ribosomal subunit protein bL25</fullName>
    </recommendedName>
    <alternativeName>
        <fullName evidence="3">50S ribosomal protein L25</fullName>
    </alternativeName>
    <alternativeName>
        <fullName evidence="1">General stress protein CTC</fullName>
    </alternativeName>
</protein>
<name>RL25_VEREI</name>
<organism>
    <name type="scientific">Verminephrobacter eiseniae (strain EF01-2)</name>
    <dbReference type="NCBI Taxonomy" id="391735"/>
    <lineage>
        <taxon>Bacteria</taxon>
        <taxon>Pseudomonadati</taxon>
        <taxon>Pseudomonadota</taxon>
        <taxon>Betaproteobacteria</taxon>
        <taxon>Burkholderiales</taxon>
        <taxon>Comamonadaceae</taxon>
        <taxon>Verminephrobacter</taxon>
    </lineage>
</organism>
<comment type="function">
    <text evidence="1">This is one of the proteins that binds to the 5S RNA in the ribosome where it forms part of the central protuberance.</text>
</comment>
<comment type="subunit">
    <text evidence="1">Part of the 50S ribosomal subunit; part of the 5S rRNA/L5/L18/L25 subcomplex. Contacts the 5S rRNA. Binds to the 5S rRNA independently of L5 and L18.</text>
</comment>
<comment type="similarity">
    <text evidence="1">Belongs to the bacterial ribosomal protein bL25 family. CTC subfamily.</text>
</comment>
<dbReference type="EMBL" id="CP000542">
    <property type="protein sequence ID" value="ABM56728.1"/>
    <property type="molecule type" value="Genomic_DNA"/>
</dbReference>
<dbReference type="RefSeq" id="WP_011808741.1">
    <property type="nucleotide sequence ID" value="NC_008786.1"/>
</dbReference>
<dbReference type="SMR" id="A1WGH1"/>
<dbReference type="STRING" id="391735.Veis_0950"/>
<dbReference type="GeneID" id="76459630"/>
<dbReference type="KEGG" id="vei:Veis_0950"/>
<dbReference type="eggNOG" id="COG1825">
    <property type="taxonomic scope" value="Bacteria"/>
</dbReference>
<dbReference type="HOGENOM" id="CLU_075939_0_1_4"/>
<dbReference type="OrthoDB" id="9806411at2"/>
<dbReference type="Proteomes" id="UP000000374">
    <property type="component" value="Chromosome"/>
</dbReference>
<dbReference type="GO" id="GO:0022625">
    <property type="term" value="C:cytosolic large ribosomal subunit"/>
    <property type="evidence" value="ECO:0007669"/>
    <property type="project" value="TreeGrafter"/>
</dbReference>
<dbReference type="GO" id="GO:0008097">
    <property type="term" value="F:5S rRNA binding"/>
    <property type="evidence" value="ECO:0007669"/>
    <property type="project" value="InterPro"/>
</dbReference>
<dbReference type="GO" id="GO:0003735">
    <property type="term" value="F:structural constituent of ribosome"/>
    <property type="evidence" value="ECO:0007669"/>
    <property type="project" value="InterPro"/>
</dbReference>
<dbReference type="GO" id="GO:0006412">
    <property type="term" value="P:translation"/>
    <property type="evidence" value="ECO:0007669"/>
    <property type="project" value="UniProtKB-UniRule"/>
</dbReference>
<dbReference type="CDD" id="cd00495">
    <property type="entry name" value="Ribosomal_L25_TL5_CTC"/>
    <property type="match status" value="1"/>
</dbReference>
<dbReference type="Gene3D" id="2.170.120.20">
    <property type="entry name" value="Ribosomal protein L25, beta domain"/>
    <property type="match status" value="1"/>
</dbReference>
<dbReference type="Gene3D" id="2.40.240.10">
    <property type="entry name" value="Ribosomal Protein L25, Chain P"/>
    <property type="match status" value="1"/>
</dbReference>
<dbReference type="HAMAP" id="MF_01336">
    <property type="entry name" value="Ribosomal_bL25"/>
    <property type="match status" value="1"/>
</dbReference>
<dbReference type="HAMAP" id="MF_01334">
    <property type="entry name" value="Ribosomal_bL25_CTC"/>
    <property type="match status" value="1"/>
</dbReference>
<dbReference type="InterPro" id="IPR020056">
    <property type="entry name" value="Rbsml_bL25/Gln-tRNA_synth_N"/>
</dbReference>
<dbReference type="InterPro" id="IPR011035">
    <property type="entry name" value="Ribosomal_bL25/Gln-tRNA_synth"/>
</dbReference>
<dbReference type="InterPro" id="IPR020057">
    <property type="entry name" value="Ribosomal_bL25_b-dom"/>
</dbReference>
<dbReference type="InterPro" id="IPR037121">
    <property type="entry name" value="Ribosomal_bL25_C"/>
</dbReference>
<dbReference type="InterPro" id="IPR001021">
    <property type="entry name" value="Ribosomal_bL25_long"/>
</dbReference>
<dbReference type="InterPro" id="IPR020055">
    <property type="entry name" value="Ribosomal_bL25_short"/>
</dbReference>
<dbReference type="InterPro" id="IPR029751">
    <property type="entry name" value="Ribosomal_L25_dom"/>
</dbReference>
<dbReference type="InterPro" id="IPR020930">
    <property type="entry name" value="Ribosomal_uL5_bac-type"/>
</dbReference>
<dbReference type="NCBIfam" id="TIGR00731">
    <property type="entry name" value="bL25_bact_ctc"/>
    <property type="match status" value="1"/>
</dbReference>
<dbReference type="NCBIfam" id="NF004128">
    <property type="entry name" value="PRK05618.1-2"/>
    <property type="match status" value="1"/>
</dbReference>
<dbReference type="NCBIfam" id="NF004130">
    <property type="entry name" value="PRK05618.1-5"/>
    <property type="match status" value="1"/>
</dbReference>
<dbReference type="NCBIfam" id="NF004612">
    <property type="entry name" value="PRK05943.1"/>
    <property type="match status" value="1"/>
</dbReference>
<dbReference type="PANTHER" id="PTHR33284">
    <property type="entry name" value="RIBOSOMAL PROTEIN L25/GLN-TRNA SYNTHETASE, ANTI-CODON-BINDING DOMAIN-CONTAINING PROTEIN"/>
    <property type="match status" value="1"/>
</dbReference>
<dbReference type="PANTHER" id="PTHR33284:SF1">
    <property type="entry name" value="RIBOSOMAL PROTEIN L25_GLN-TRNA SYNTHETASE, ANTI-CODON-BINDING DOMAIN-CONTAINING PROTEIN"/>
    <property type="match status" value="1"/>
</dbReference>
<dbReference type="Pfam" id="PF01386">
    <property type="entry name" value="Ribosomal_L25p"/>
    <property type="match status" value="1"/>
</dbReference>
<dbReference type="Pfam" id="PF14693">
    <property type="entry name" value="Ribosomal_TL5_C"/>
    <property type="match status" value="1"/>
</dbReference>
<dbReference type="SUPFAM" id="SSF50715">
    <property type="entry name" value="Ribosomal protein L25-like"/>
    <property type="match status" value="1"/>
</dbReference>
<accession>A1WGH1</accession>
<gene>
    <name evidence="1" type="primary">rplY</name>
    <name evidence="1" type="synonym">ctc</name>
    <name type="ordered locus">Veis_0950</name>
</gene>
<keyword id="KW-1185">Reference proteome</keyword>
<keyword id="KW-0687">Ribonucleoprotein</keyword>
<keyword id="KW-0689">Ribosomal protein</keyword>
<keyword id="KW-0694">RNA-binding</keyword>
<keyword id="KW-0699">rRNA-binding</keyword>
<feature type="chain" id="PRO_1000052944" description="Large ribosomal subunit protein bL25">
    <location>
        <begin position="1"/>
        <end position="235"/>
    </location>
</feature>
<feature type="region of interest" description="Disordered" evidence="2">
    <location>
        <begin position="201"/>
        <end position="235"/>
    </location>
</feature>
<feature type="compositionally biased region" description="Low complexity" evidence="2">
    <location>
        <begin position="212"/>
        <end position="228"/>
    </location>
</feature>
<evidence type="ECO:0000255" key="1">
    <source>
        <dbReference type="HAMAP-Rule" id="MF_01334"/>
    </source>
</evidence>
<evidence type="ECO:0000256" key="2">
    <source>
        <dbReference type="SAM" id="MobiDB-lite"/>
    </source>
</evidence>
<evidence type="ECO:0000305" key="3"/>
<reference key="1">
    <citation type="submission" date="2006-12" db="EMBL/GenBank/DDBJ databases">
        <title>Complete sequence of chromosome 1 of Verminephrobacter eiseniae EF01-2.</title>
        <authorList>
            <person name="Copeland A."/>
            <person name="Lucas S."/>
            <person name="Lapidus A."/>
            <person name="Barry K."/>
            <person name="Detter J.C."/>
            <person name="Glavina del Rio T."/>
            <person name="Dalin E."/>
            <person name="Tice H."/>
            <person name="Pitluck S."/>
            <person name="Chertkov O."/>
            <person name="Brettin T."/>
            <person name="Bruce D."/>
            <person name="Han C."/>
            <person name="Tapia R."/>
            <person name="Gilna P."/>
            <person name="Schmutz J."/>
            <person name="Larimer F."/>
            <person name="Land M."/>
            <person name="Hauser L."/>
            <person name="Kyrpides N."/>
            <person name="Kim E."/>
            <person name="Stahl D."/>
            <person name="Richardson P."/>
        </authorList>
    </citation>
    <scope>NUCLEOTIDE SEQUENCE [LARGE SCALE GENOMIC DNA]</scope>
    <source>
        <strain>EF01-2</strain>
    </source>
</reference>
<proteinExistence type="inferred from homology"/>
<sequence length="235" mass="25268">MNFVAFERAKQGTGASRRLRNSGKTPGIVYGGSAEPQMIELDHNALWHALKKEAFHSSVLDMEVAGKTDKVLLRDVQYHPFKQCVLHIDFQRVDDKTRLHMKVPLHYSGSEESNAVKVDKCMVNLIVNELDVTCMPSDLPEFIAVDLSKLEKGTSLHLKDIKLPRGVTPVIRGGQHNPALVSVVPPVVVLEAPVADAAPAPVAEAKGKGKAAKPAATAKPAAAAAKPAAKPKAKK</sequence>